<gene>
    <name evidence="1" type="primary">hspQ</name>
    <name type="ordered locus">E2348C_0952</name>
</gene>
<keyword id="KW-0963">Cytoplasm</keyword>
<keyword id="KW-1185">Reference proteome</keyword>
<keyword id="KW-0346">Stress response</keyword>
<evidence type="ECO:0000255" key="1">
    <source>
        <dbReference type="HAMAP-Rule" id="MF_01194"/>
    </source>
</evidence>
<evidence type="ECO:0000256" key="2">
    <source>
        <dbReference type="SAM" id="MobiDB-lite"/>
    </source>
</evidence>
<comment type="function">
    <text evidence="1">Involved in the degradation of certain denaturated proteins, including DnaA, during heat shock stress.</text>
</comment>
<comment type="subcellular location">
    <subcellularLocation>
        <location evidence="1">Cytoplasm</location>
    </subcellularLocation>
</comment>
<comment type="similarity">
    <text evidence="1">Belongs to the HspQ family.</text>
</comment>
<sequence>MIASKFGIGQQVRHSLLGYLGVVVDIDPVYSLSEPSPDELAVNDELRAAPWYHVVMEDDNGLPVHTYLAEAQLSSELQDEHPEQPSMDELAQTIRKQLQAPRLRN</sequence>
<protein>
    <recommendedName>
        <fullName evidence="1">Heat shock protein HspQ</fullName>
    </recommendedName>
</protein>
<accession>B7UN45</accession>
<feature type="chain" id="PRO_1000164509" description="Heat shock protein HspQ">
    <location>
        <begin position="1"/>
        <end position="105"/>
    </location>
</feature>
<feature type="region of interest" description="Disordered" evidence="2">
    <location>
        <begin position="75"/>
        <end position="105"/>
    </location>
</feature>
<organism>
    <name type="scientific">Escherichia coli O127:H6 (strain E2348/69 / EPEC)</name>
    <dbReference type="NCBI Taxonomy" id="574521"/>
    <lineage>
        <taxon>Bacteria</taxon>
        <taxon>Pseudomonadati</taxon>
        <taxon>Pseudomonadota</taxon>
        <taxon>Gammaproteobacteria</taxon>
        <taxon>Enterobacterales</taxon>
        <taxon>Enterobacteriaceae</taxon>
        <taxon>Escherichia</taxon>
    </lineage>
</organism>
<dbReference type="EMBL" id="FM180568">
    <property type="protein sequence ID" value="CAS08500.1"/>
    <property type="molecule type" value="Genomic_DNA"/>
</dbReference>
<dbReference type="RefSeq" id="WP_001295356.1">
    <property type="nucleotide sequence ID" value="NC_011601.1"/>
</dbReference>
<dbReference type="SMR" id="B7UN45"/>
<dbReference type="GeneID" id="93776448"/>
<dbReference type="KEGG" id="ecg:E2348C_0952"/>
<dbReference type="HOGENOM" id="CLU_123865_1_0_6"/>
<dbReference type="Proteomes" id="UP000008205">
    <property type="component" value="Chromosome"/>
</dbReference>
<dbReference type="GO" id="GO:0005737">
    <property type="term" value="C:cytoplasm"/>
    <property type="evidence" value="ECO:0007669"/>
    <property type="project" value="UniProtKB-SubCell"/>
</dbReference>
<dbReference type="GO" id="GO:0003677">
    <property type="term" value="F:DNA binding"/>
    <property type="evidence" value="ECO:0007669"/>
    <property type="project" value="InterPro"/>
</dbReference>
<dbReference type="GO" id="GO:0009408">
    <property type="term" value="P:response to heat"/>
    <property type="evidence" value="ECO:0007669"/>
    <property type="project" value="UniProtKB-UniRule"/>
</dbReference>
<dbReference type="Gene3D" id="2.30.30.390">
    <property type="entry name" value="Hemimethylated DNA-binding domain"/>
    <property type="match status" value="1"/>
</dbReference>
<dbReference type="HAMAP" id="MF_01194">
    <property type="entry name" value="HspQ"/>
    <property type="match status" value="1"/>
</dbReference>
<dbReference type="InterPro" id="IPR011722">
    <property type="entry name" value="Hemimethylated_DNA-bd_dom"/>
</dbReference>
<dbReference type="InterPro" id="IPR036623">
    <property type="entry name" value="Hemimethylated_DNA-bd_sf"/>
</dbReference>
<dbReference type="InterPro" id="IPR022866">
    <property type="entry name" value="HspQ"/>
</dbReference>
<dbReference type="NCBIfam" id="NF010729">
    <property type="entry name" value="PRK14129.1"/>
    <property type="match status" value="1"/>
</dbReference>
<dbReference type="NCBIfam" id="TIGR02097">
    <property type="entry name" value="yccV"/>
    <property type="match status" value="1"/>
</dbReference>
<dbReference type="Pfam" id="PF08755">
    <property type="entry name" value="YccV-like"/>
    <property type="match status" value="1"/>
</dbReference>
<dbReference type="SMART" id="SM00992">
    <property type="entry name" value="YccV-like"/>
    <property type="match status" value="1"/>
</dbReference>
<dbReference type="SUPFAM" id="SSF141255">
    <property type="entry name" value="YccV-like"/>
    <property type="match status" value="1"/>
</dbReference>
<name>HSPQ_ECO27</name>
<reference key="1">
    <citation type="journal article" date="2009" name="J. Bacteriol.">
        <title>Complete genome sequence and comparative genome analysis of enteropathogenic Escherichia coli O127:H6 strain E2348/69.</title>
        <authorList>
            <person name="Iguchi A."/>
            <person name="Thomson N.R."/>
            <person name="Ogura Y."/>
            <person name="Saunders D."/>
            <person name="Ooka T."/>
            <person name="Henderson I.R."/>
            <person name="Harris D."/>
            <person name="Asadulghani M."/>
            <person name="Kurokawa K."/>
            <person name="Dean P."/>
            <person name="Kenny B."/>
            <person name="Quail M.A."/>
            <person name="Thurston S."/>
            <person name="Dougan G."/>
            <person name="Hayashi T."/>
            <person name="Parkhill J."/>
            <person name="Frankel G."/>
        </authorList>
    </citation>
    <scope>NUCLEOTIDE SEQUENCE [LARGE SCALE GENOMIC DNA]</scope>
    <source>
        <strain>E2348/69 / EPEC</strain>
    </source>
</reference>
<proteinExistence type="inferred from homology"/>